<organism>
    <name type="scientific">Anas platyrhynchos</name>
    <name type="common">Mallard</name>
    <name type="synonym">Anas boschas</name>
    <dbReference type="NCBI Taxonomy" id="8839"/>
    <lineage>
        <taxon>Eukaryota</taxon>
        <taxon>Metazoa</taxon>
        <taxon>Chordata</taxon>
        <taxon>Craniata</taxon>
        <taxon>Vertebrata</taxon>
        <taxon>Euteleostomi</taxon>
        <taxon>Archelosauria</taxon>
        <taxon>Archosauria</taxon>
        <taxon>Dinosauria</taxon>
        <taxon>Saurischia</taxon>
        <taxon>Theropoda</taxon>
        <taxon>Coelurosauria</taxon>
        <taxon>Aves</taxon>
        <taxon>Neognathae</taxon>
        <taxon>Galloanserae</taxon>
        <taxon>Anseriformes</taxon>
        <taxon>Anatidae</taxon>
        <taxon>Anatinae</taxon>
        <taxon>Anas</taxon>
    </lineage>
</organism>
<sequence length="1389" mass="153506">MAGAARGLLWAALSLCLLPEPLRAAHIKKAEAAAAGGGGGVGGELRYLHAAELGQALRDLVAEAPPGLARLFSIGRSVEGRPLWVLRLTAGLPELPEARQDGEKKKKEEEEEEEEEEGEEGGGGALPGRPQVKLVGNMHGDEPLARPLLLRLAQELVRGWAGGDERLGRLLNTTDLYLLPSLNPDGFERAREGDCGGGGGGGGEGGGEPGGRENSRGRDLNRSFPDQFGSAQPDLEPVPEVRALIAWMRRNKFLLSGNLHGGSVVASYPYDDSPTHRPTGVYSKSADDEVFKYLAKAYASHHPIMRTGKPNCPGEEGETFQDGITNGAQWYDVEGGMQDYNYVWANCFEITLELSCCKYPPTSELQQEWENNRESLLTFIEKVHIGVKGFVRDAITGAGLENATIVVAGIAHNITAGKFGDYHRLLVPGTYNVTAVVMGYAPVTKENIEVKEADATVVDFSLQPTVVAPDPNLTQFTATPAPPSTLTPSVAQVEPPATTSLHQAVQPVDFRHHHFSDMEIFLRRYANEYPSITRLYSVGKSVELRELYVMEISDNPGIHEAGEPEFKYIGNMHGNEVVGRELLLNLIEYLCKNFGTDPEVTDLVQSTRIHIMPSMNPDGYEKSQEGDRGGTVGRNNSNNYDLNRNFPDQFFQVTDPPQPETLAVMSWLKTYPFVLSANLHGGSLVVNYPFDDDEQGIAIYSKSPDDAVFQQLALSYSKENKKMYQGSPCKDLYPTEYFPHGITNGAQWYNVPGGMQDWNYLNTNCFEVTIELGCVKYPKAEELPKYWEQNRRSLLQFIKQVHRGIWGFVLDATDGRGILNATISVADINHPVTTYKDGDYWRLLVQGTYKVTASARGYDPVTKTVEVDSKGGVQVNFTLSRTDAKVEEGKVPVLNTPDTSDPNEKEFETLIKDLSAENGLERLLLASSGKVSPYRYRPYKDLSEFLRGLYLNYPHITNLTSLGQSVEFRQIWSLEISNKPNHSEPEEPKIRFVAGIHGNAPVGTELLLALAEFLCMNYKKNSAVTKLIDRTRIVIVPSLNPDGREIAQERGCTSKLGHANAHGRDLDTDFTSNYSWYSGTREPETKAIIENLILKQDFSLSVALDGGSLLVTYPFDKPAQTVENKETLKHLASVYANNHPLMHLGQPGCPNKSDENIPGGVIRGSEWHSHLGSMKDFSVTFGHCPEITVYTSCCYFPSAGQLPGLWADHRKSLLSMLVEVHKGVHGFVQDKSGKAISKATIVLNEGLRVYTKEGGYFHVLLAPGLHNINAIADGYQQKHMKVLVRHDAPSSVFIVFDMENRIFGLPRELVVTVAGASMSALVLTACIIWCVCSIKSNRHKDGFPTLRQHHDDYEDEIRMMSTGSKKSLLSHEFQDETDTEEETLYSSKH</sequence>
<accession>Q90240</accession>
<accession>O57512</accession>
<accession>Q9PXB2</accession>
<accession>Q9PXB3</accession>
<accession>Q9PXB4</accession>
<accession>Q9PXB5</accession>
<gene>
    <name type="primary">CPD</name>
</gene>
<proteinExistence type="evidence at protein level"/>
<name>CBPD_ANAPL</name>
<feature type="signal peptide" evidence="3">
    <location>
        <begin position="1"/>
        <end position="25"/>
    </location>
</feature>
<feature type="chain" id="PRO_0000004404" description="Carboxypeptidase D" evidence="3">
    <location>
        <begin position="26"/>
        <end position="1389"/>
    </location>
</feature>
<feature type="topological domain" description="Extracellular" evidence="3">
    <location>
        <begin position="26"/>
        <end position="1308"/>
    </location>
</feature>
<feature type="transmembrane region" description="Helical" evidence="3">
    <location>
        <begin position="1309"/>
        <end position="1329"/>
    </location>
</feature>
<feature type="topological domain" description="Cytoplasmic" evidence="3">
    <location>
        <begin position="1330"/>
        <end position="1389"/>
    </location>
</feature>
<feature type="domain" description="Peptidase M14 1" evidence="4">
    <location>
        <begin position="46"/>
        <end position="383"/>
    </location>
</feature>
<feature type="domain" description="Peptidase M14 2" evidence="4">
    <location>
        <begin position="511"/>
        <end position="801"/>
    </location>
</feature>
<feature type="domain" description="Peptidase M14 3" evidence="4">
    <location>
        <begin position="935"/>
        <end position="1220"/>
    </location>
</feature>
<feature type="region of interest" description="Disordered" evidence="5">
    <location>
        <begin position="95"/>
        <end position="133"/>
    </location>
</feature>
<feature type="region of interest" description="Disordered" evidence="5">
    <location>
        <begin position="188"/>
        <end position="235"/>
    </location>
</feature>
<feature type="region of interest" description="Disordered" evidence="5">
    <location>
        <begin position="614"/>
        <end position="639"/>
    </location>
</feature>
<feature type="region of interest" description="Disordered" evidence="5">
    <location>
        <begin position="1367"/>
        <end position="1389"/>
    </location>
</feature>
<feature type="compositionally biased region" description="Basic and acidic residues" evidence="5">
    <location>
        <begin position="96"/>
        <end position="108"/>
    </location>
</feature>
<feature type="compositionally biased region" description="Acidic residues" evidence="5">
    <location>
        <begin position="109"/>
        <end position="120"/>
    </location>
</feature>
<feature type="compositionally biased region" description="Gly residues" evidence="5">
    <location>
        <begin position="195"/>
        <end position="209"/>
    </location>
</feature>
<feature type="compositionally biased region" description="Basic and acidic residues" evidence="5">
    <location>
        <begin position="210"/>
        <end position="221"/>
    </location>
</feature>
<feature type="compositionally biased region" description="Basic and acidic residues" evidence="5">
    <location>
        <begin position="619"/>
        <end position="628"/>
    </location>
</feature>
<feature type="active site" description="Proton donor/acceptor" evidence="4 13">
    <location>
        <position position="353"/>
    </location>
</feature>
<feature type="active site" description="Proton donor/acceptor" evidence="4 13">
    <location>
        <position position="771"/>
    </location>
</feature>
<feature type="binding site" evidence="4">
    <location>
        <position position="139"/>
    </location>
    <ligand>
        <name>Zn(2+)</name>
        <dbReference type="ChEBI" id="CHEBI:29105"/>
        <label>1</label>
        <note>catalytic</note>
    </ligand>
</feature>
<feature type="binding site" evidence="4">
    <location>
        <position position="142"/>
    </location>
    <ligand>
        <name>Zn(2+)</name>
        <dbReference type="ChEBI" id="CHEBI:29105"/>
        <label>1</label>
        <note>catalytic</note>
    </ligand>
</feature>
<feature type="binding site" evidence="4">
    <location>
        <position position="260"/>
    </location>
    <ligand>
        <name>Zn(2+)</name>
        <dbReference type="ChEBI" id="CHEBI:29105"/>
        <label>1</label>
        <note>catalytic</note>
    </ligand>
</feature>
<feature type="binding site" evidence="4">
    <location>
        <position position="573"/>
    </location>
    <ligand>
        <name>Zn(2+)</name>
        <dbReference type="ChEBI" id="CHEBI:29105"/>
        <label>2</label>
        <note>catalytic</note>
    </ligand>
</feature>
<feature type="binding site" evidence="4">
    <location>
        <position position="576"/>
    </location>
    <ligand>
        <name>Zn(2+)</name>
        <dbReference type="ChEBI" id="CHEBI:29105"/>
        <label>2</label>
        <note>catalytic</note>
    </ligand>
</feature>
<feature type="binding site" evidence="4">
    <location>
        <position position="680"/>
    </location>
    <ligand>
        <name>Zn(2+)</name>
        <dbReference type="ChEBI" id="CHEBI:29105"/>
        <label>2</label>
        <note>catalytic</note>
    </ligand>
</feature>
<feature type="lipid moiety-binding region" description="S-palmitoyl cysteine" evidence="1">
    <location>
        <position position="1326"/>
    </location>
</feature>
<feature type="lipid moiety-binding region" description="S-palmitoyl cysteine" evidence="1">
    <location>
        <position position="1330"/>
    </location>
</feature>
<feature type="lipid moiety-binding region" description="S-palmitoyl cysteine" evidence="1">
    <location>
        <position position="1332"/>
    </location>
</feature>
<feature type="glycosylation site" description="N-linked (GlcNAc...) asparagine" evidence="1">
    <location>
        <position position="172"/>
    </location>
</feature>
<feature type="glycosylation site" description="N-linked (GlcNAc...) asparagine" evidence="3">
    <location>
        <position position="221"/>
    </location>
</feature>
<feature type="glycosylation site" description="N-linked (GlcNAc...) asparagine" evidence="3">
    <location>
        <position position="402"/>
    </location>
</feature>
<feature type="glycosylation site" description="N-linked (GlcNAc...) asparagine" evidence="3">
    <location>
        <position position="413"/>
    </location>
</feature>
<feature type="glycosylation site" description="N-linked (GlcNAc...) asparagine" evidence="3">
    <location>
        <position position="432"/>
    </location>
</feature>
<feature type="glycosylation site" description="N-linked (GlcNAc...) asparagine" evidence="3">
    <location>
        <position position="472"/>
    </location>
</feature>
<feature type="glycosylation site" description="N-linked (GlcNAc...) asparagine" evidence="2">
    <location>
        <position position="635"/>
    </location>
</feature>
<feature type="glycosylation site" description="N-linked (GlcNAc...) asparagine" evidence="2">
    <location>
        <position position="820"/>
    </location>
</feature>
<feature type="glycosylation site" description="N-linked (GlcNAc...) asparagine" evidence="2">
    <location>
        <position position="876"/>
    </location>
</feature>
<feature type="glycosylation site" description="N-linked (GlcNAc...) asparagine" evidence="1">
    <location>
        <position position="958"/>
    </location>
</feature>
<feature type="glycosylation site" description="N-linked (GlcNAc...) asparagine" evidence="3">
    <location>
        <position position="981"/>
    </location>
</feature>
<feature type="glycosylation site" description="N-linked (GlcNAc...) asparagine" evidence="3">
    <location>
        <position position="1073"/>
    </location>
</feature>
<feature type="glycosylation site" description="N-linked (GlcNAc...) asparagine" evidence="3">
    <location>
        <position position="1151"/>
    </location>
</feature>
<feature type="mutagenesis site" description="Loss of catalytic activity in carboxypeptidase domain 1. Total loss of catalytic activity; when associated with Q-771." evidence="7">
    <original>E</original>
    <variation>Q</variation>
    <location>
        <position position="353"/>
    </location>
</feature>
<feature type="mutagenesis site" description="Loss of catalytic activity in carboxypeptidase domain 2. Total loss of catalytic activity; when associated with Q-535." evidence="7">
    <original>E</original>
    <variation>Q</variation>
    <location>
        <position position="771"/>
    </location>
</feature>
<feature type="sequence conflict" description="In Ref. 2." evidence="12" ref="2">
    <original>G</original>
    <variation>GG</variation>
    <location>
        <position position="40"/>
    </location>
</feature>
<feature type="sequence conflict" description="In Ref. 2; AAB96915." evidence="12" ref="2">
    <location>
        <position position="108"/>
    </location>
</feature>
<feature type="sequence conflict" description="In Ref. 2; AAB96915." evidence="12" ref="2">
    <location>
        <begin position="196"/>
        <end position="197"/>
    </location>
</feature>
<feature type="sequence conflict" description="In Ref. 2; AAB96915." evidence="12" ref="2">
    <original>F</original>
    <variation>Y</variation>
    <location>
        <position position="390"/>
    </location>
</feature>
<feature type="sequence conflict" description="In Ref. 2; AAB96915." evidence="12" ref="2">
    <original>A</original>
    <variation>G</variation>
    <location>
        <position position="453"/>
    </location>
</feature>
<feature type="sequence conflict" description="In Ref. 2; AAB96915." evidence="12" ref="2">
    <original>P</original>
    <variation>L</variation>
    <location>
        <position position="483"/>
    </location>
</feature>
<feature type="sequence conflict" description="In Ref. 2; AAB96915." evidence="12" ref="2">
    <original>V</original>
    <variation>A</variation>
    <location>
        <position position="493"/>
    </location>
</feature>
<feature type="sequence conflict" description="In Ref. 2; AAB96915." evidence="12" ref="2">
    <original>Q</original>
    <variation>R</variation>
    <location>
        <position position="503"/>
    </location>
</feature>
<feature type="sequence conflict" description="In Ref. 2; AAB96915 and 1; AA sequence." evidence="12" ref="2 1">
    <original>I</original>
    <variation>V</variation>
    <location>
        <position position="558"/>
    </location>
</feature>
<feature type="sequence conflict" description="In Ref. 2; AAB96915." evidence="12" ref="2">
    <original>W</original>
    <variation>R</variation>
    <location>
        <position position="1076"/>
    </location>
</feature>
<feature type="sequence conflict" description="In Ref. 2; AAB96915." evidence="12" ref="2">
    <original>E</original>
    <variation>D</variation>
    <location>
        <position position="1126"/>
    </location>
</feature>
<evidence type="ECO:0000250" key="1">
    <source>
        <dbReference type="UniProtKB" id="O75976"/>
    </source>
</evidence>
<evidence type="ECO:0000250" key="2">
    <source>
        <dbReference type="UniProtKB" id="P83852"/>
    </source>
</evidence>
<evidence type="ECO:0000255" key="3"/>
<evidence type="ECO:0000255" key="4">
    <source>
        <dbReference type="PROSITE-ProRule" id="PRU01379"/>
    </source>
</evidence>
<evidence type="ECO:0000256" key="5">
    <source>
        <dbReference type="SAM" id="MobiDB-lite"/>
    </source>
</evidence>
<evidence type="ECO:0000269" key="6">
    <source>
    </source>
</evidence>
<evidence type="ECO:0000269" key="7">
    <source>
    </source>
</evidence>
<evidence type="ECO:0000269" key="8">
    <source>
    </source>
</evidence>
<evidence type="ECO:0000269" key="9">
    <source>
    </source>
</evidence>
<evidence type="ECO:0000269" key="10">
    <source>
    </source>
</evidence>
<evidence type="ECO:0000269" key="11">
    <source>
    </source>
</evidence>
<evidence type="ECO:0000305" key="12"/>
<evidence type="ECO:0000305" key="13">
    <source>
    </source>
</evidence>
<evidence type="ECO:0000312" key="14">
    <source>
        <dbReference type="EMBL" id="AAA78903.1"/>
    </source>
</evidence>
<evidence type="ECO:0000312" key="15">
    <source>
        <dbReference type="EMBL" id="AAB96915.1"/>
    </source>
</evidence>
<reference evidence="12 14" key="1">
    <citation type="journal article" date="1995" name="J. Biol. Chem.">
        <title>gp180, a host cell glycoprotein that binds duck hepatitis B virus particles, is encoded by a member of the carboxypeptidase gene family.</title>
        <authorList>
            <person name="Kuroki K."/>
            <person name="Eng F."/>
            <person name="Ishikawa T."/>
            <person name="Turck C."/>
            <person name="Harada F."/>
            <person name="Ganem D."/>
        </authorList>
    </citation>
    <scope>NUCLEOTIDE SEQUENCE [MRNA]</scope>
    <scope>PROTEIN SEQUENCE OF 420-424; 504-511; 551-564; 843-850; 1065-1075 AND 1123-1231</scope>
    <scope>BLOCKAGE OF N-TERMINUS</scope>
    <source>
        <strain evidence="9">Pekin breed</strain>
        <tissue evidence="14">Liver</tissue>
    </source>
</reference>
<reference evidence="15" key="2">
    <citation type="journal article" date="1999" name="J. Virol.">
        <title>Carboxypeptidase D is an avian hepatitis B virus receptor.</title>
        <authorList>
            <person name="Tong S."/>
            <person name="Li J."/>
            <person name="Wands J.R."/>
        </authorList>
    </citation>
    <scope>NUCLEOTIDE SEQUENCE [MRNA]</scope>
    <source>
        <tissue evidence="6">Liver</tissue>
    </source>
</reference>
<reference evidence="12 15" key="3">
    <citation type="journal article" date="1995" name="J. Virol.">
        <title>Interaction between duck hepatitis B virus and a 170-kilodalton cellular protein is mediated through a neutralizing epitope of the pre-S region and occurs during viral infection.</title>
        <authorList>
            <person name="Tong S."/>
            <person name="Li J."/>
            <person name="Wands J.R."/>
        </authorList>
    </citation>
    <scope>PROTEIN SEQUENCE OF 541-567; 886-898; 1027-1047 AND 1367-1388</scope>
    <scope>SUBUNIT</scope>
    <scope>TISSUE SPECIFICITY</scope>
    <source>
        <strain evidence="8">Pekin breed</strain>
    </source>
</reference>
<reference evidence="12" key="4">
    <citation type="journal article" date="1994" name="J. Virol.">
        <title>A cell surface protein that binds avian hepatitis B virus particles.</title>
        <authorList>
            <person name="Kuroki K."/>
            <person name="Cheung R."/>
            <person name="Marion P.L."/>
            <person name="Ganem D."/>
        </authorList>
    </citation>
    <scope>SUBUNIT</scope>
    <scope>SUBCELLULAR LOCATION</scope>
    <scope>TISSUE SPECIFICITY</scope>
    <source>
        <strain evidence="10">Pekin breed</strain>
    </source>
</reference>
<reference evidence="12" key="5">
    <citation type="journal article" date="1998" name="J. Biol. Chem.">
        <title>gp180, a protein that binds duck hepatitis B virus particles, has metallocarboxypeptidase D-like enzymatic activity.</title>
        <authorList>
            <person name="Eng F.J."/>
            <person name="Novikova E.G."/>
            <person name="Kuroki K."/>
            <person name="Ganem D."/>
            <person name="Fricker L.D."/>
        </authorList>
    </citation>
    <scope>CATALYTIC ACTIVITY</scope>
    <scope>COFACTOR</scope>
    <scope>SUBUNIT</scope>
</reference>
<reference evidence="12" key="6">
    <citation type="journal article" date="1999" name="J. Biol. Chem.">
        <title>Characterization of the enzymatic properties of the first and second domains of metallocarboxypeptidase D.</title>
        <authorList>
            <person name="Novikova E.G."/>
            <person name="Eng F.J."/>
            <person name="Yan L."/>
            <person name="Qian Y."/>
            <person name="Fricker L.D."/>
        </authorList>
    </citation>
    <scope>CATALYTIC ACTIVITY</scope>
    <scope>COFACTOR</scope>
    <scope>MUTAGENESIS OF GLU-353 AND GLU-771</scope>
</reference>
<dbReference type="EC" id="3.4.17.22"/>
<dbReference type="EMBL" id="U25126">
    <property type="protein sequence ID" value="AAA78903.1"/>
    <property type="molecule type" value="mRNA"/>
</dbReference>
<dbReference type="EMBL" id="AF039749">
    <property type="protein sequence ID" value="AAB96915.1"/>
    <property type="molecule type" value="mRNA"/>
</dbReference>
<dbReference type="PIR" id="I50090">
    <property type="entry name" value="I50090"/>
</dbReference>
<dbReference type="RefSeq" id="NP_001297311.1">
    <property type="nucleotide sequence ID" value="NM_001310382.1"/>
</dbReference>
<dbReference type="SMR" id="Q90240"/>
<dbReference type="MEROPS" id="M14.950"/>
<dbReference type="GlyCosmos" id="Q90240">
    <property type="glycosylation" value="13 sites, No reported glycans"/>
</dbReference>
<dbReference type="SwissPalm" id="Q90240"/>
<dbReference type="GeneID" id="101802114"/>
<dbReference type="KEGG" id="apla:101802114"/>
<dbReference type="CTD" id="1362"/>
<dbReference type="OrthoDB" id="10249045at2759"/>
<dbReference type="BRENDA" id="3.4.17.22">
    <property type="organism ID" value="334"/>
</dbReference>
<dbReference type="SABIO-RK" id="Q90240"/>
<dbReference type="Proteomes" id="UP000694400">
    <property type="component" value="Unplaced"/>
</dbReference>
<dbReference type="GO" id="GO:0005615">
    <property type="term" value="C:extracellular space"/>
    <property type="evidence" value="ECO:0007669"/>
    <property type="project" value="TreeGrafter"/>
</dbReference>
<dbReference type="GO" id="GO:0016020">
    <property type="term" value="C:membrane"/>
    <property type="evidence" value="ECO:0000314"/>
    <property type="project" value="UniProtKB"/>
</dbReference>
<dbReference type="GO" id="GO:0005886">
    <property type="term" value="C:plasma membrane"/>
    <property type="evidence" value="ECO:0007669"/>
    <property type="project" value="UniProtKB-SubCell"/>
</dbReference>
<dbReference type="GO" id="GO:0004181">
    <property type="term" value="F:metallocarboxypeptidase activity"/>
    <property type="evidence" value="ECO:0000314"/>
    <property type="project" value="UniProtKB"/>
</dbReference>
<dbReference type="GO" id="GO:0008270">
    <property type="term" value="F:zinc ion binding"/>
    <property type="evidence" value="ECO:0000314"/>
    <property type="project" value="UniProtKB"/>
</dbReference>
<dbReference type="GO" id="GO:0006518">
    <property type="term" value="P:peptide metabolic process"/>
    <property type="evidence" value="ECO:0007669"/>
    <property type="project" value="TreeGrafter"/>
</dbReference>
<dbReference type="GO" id="GO:0016485">
    <property type="term" value="P:protein processing"/>
    <property type="evidence" value="ECO:0007669"/>
    <property type="project" value="TreeGrafter"/>
</dbReference>
<dbReference type="GO" id="GO:0006508">
    <property type="term" value="P:proteolysis"/>
    <property type="evidence" value="ECO:0000314"/>
    <property type="project" value="UniProtKB"/>
</dbReference>
<dbReference type="CDD" id="cd03863">
    <property type="entry name" value="M14_CPD_II"/>
    <property type="match status" value="1"/>
</dbReference>
<dbReference type="CDD" id="cd06245">
    <property type="entry name" value="M14_CPD_III"/>
    <property type="match status" value="1"/>
</dbReference>
<dbReference type="CDD" id="cd11308">
    <property type="entry name" value="Peptidase_M14NE-CP-C_like"/>
    <property type="match status" value="3"/>
</dbReference>
<dbReference type="FunFam" id="2.60.40.1120:FF:000005">
    <property type="entry name" value="Carboxypeptidase D"/>
    <property type="match status" value="1"/>
</dbReference>
<dbReference type="FunFam" id="2.60.40.1120:FF:000006">
    <property type="entry name" value="Carboxypeptidase D"/>
    <property type="match status" value="1"/>
</dbReference>
<dbReference type="FunFam" id="2.60.40.1120:FF:000008">
    <property type="entry name" value="Carboxypeptidase D"/>
    <property type="match status" value="1"/>
</dbReference>
<dbReference type="FunFam" id="3.40.630.10:FF:000020">
    <property type="entry name" value="Carboxypeptidase D"/>
    <property type="match status" value="1"/>
</dbReference>
<dbReference type="FunFam" id="3.40.630.10:FF:000026">
    <property type="entry name" value="Carboxypeptidase D"/>
    <property type="match status" value="1"/>
</dbReference>
<dbReference type="FunFam" id="3.40.630.10:FF:000043">
    <property type="entry name" value="Carboxypeptidase D"/>
    <property type="match status" value="1"/>
</dbReference>
<dbReference type="Gene3D" id="2.60.40.1120">
    <property type="entry name" value="Carboxypeptidase-like, regulatory domain"/>
    <property type="match status" value="3"/>
</dbReference>
<dbReference type="Gene3D" id="3.40.630.10">
    <property type="entry name" value="Zn peptidases"/>
    <property type="match status" value="3"/>
</dbReference>
<dbReference type="InterPro" id="IPR008969">
    <property type="entry name" value="CarboxyPept-like_regulatory"/>
</dbReference>
<dbReference type="InterPro" id="IPR034224">
    <property type="entry name" value="M14_CPD_II"/>
</dbReference>
<dbReference type="InterPro" id="IPR033848">
    <property type="entry name" value="M14_CPD_III"/>
</dbReference>
<dbReference type="InterPro" id="IPR000834">
    <property type="entry name" value="Peptidase_M14"/>
</dbReference>
<dbReference type="InterPro" id="IPR050753">
    <property type="entry name" value="Peptidase_M14_domain"/>
</dbReference>
<dbReference type="PANTHER" id="PTHR11532:SF73">
    <property type="entry name" value="CARBOXYPEPTIDASE D"/>
    <property type="match status" value="1"/>
</dbReference>
<dbReference type="PANTHER" id="PTHR11532">
    <property type="entry name" value="PROTEASE M14 CARBOXYPEPTIDASE"/>
    <property type="match status" value="1"/>
</dbReference>
<dbReference type="Pfam" id="PF13620">
    <property type="entry name" value="CarboxypepD_reg"/>
    <property type="match status" value="2"/>
</dbReference>
<dbReference type="Pfam" id="PF00246">
    <property type="entry name" value="Peptidase_M14"/>
    <property type="match status" value="3"/>
</dbReference>
<dbReference type="PRINTS" id="PR00765">
    <property type="entry name" value="CRBOXYPTASEA"/>
</dbReference>
<dbReference type="SMART" id="SM00631">
    <property type="entry name" value="Zn_pept"/>
    <property type="match status" value="3"/>
</dbReference>
<dbReference type="SUPFAM" id="SSF49464">
    <property type="entry name" value="Carboxypeptidase regulatory domain-like"/>
    <property type="match status" value="3"/>
</dbReference>
<dbReference type="SUPFAM" id="SSF53187">
    <property type="entry name" value="Zn-dependent exopeptidases"/>
    <property type="match status" value="3"/>
</dbReference>
<dbReference type="PROSITE" id="PS00132">
    <property type="entry name" value="CARBOXYPEPT_ZN_1"/>
    <property type="match status" value="2"/>
</dbReference>
<dbReference type="PROSITE" id="PS00133">
    <property type="entry name" value="CARBOXYPEPT_ZN_2"/>
    <property type="match status" value="2"/>
</dbReference>
<dbReference type="PROSITE" id="PS52035">
    <property type="entry name" value="PEPTIDASE_M14"/>
    <property type="match status" value="3"/>
</dbReference>
<keyword id="KW-0121">Carboxypeptidase</keyword>
<keyword id="KW-1003">Cell membrane</keyword>
<keyword id="KW-0903">Direct protein sequencing</keyword>
<keyword id="KW-0325">Glycoprotein</keyword>
<keyword id="KW-0378">Hydrolase</keyword>
<keyword id="KW-0449">Lipoprotein</keyword>
<keyword id="KW-0472">Membrane</keyword>
<keyword id="KW-0479">Metal-binding</keyword>
<keyword id="KW-0482">Metalloprotease</keyword>
<keyword id="KW-0564">Palmitate</keyword>
<keyword id="KW-0645">Protease</keyword>
<keyword id="KW-0677">Repeat</keyword>
<keyword id="KW-0732">Signal</keyword>
<keyword id="KW-0812">Transmembrane</keyword>
<keyword id="KW-1133">Transmembrane helix</keyword>
<keyword id="KW-0862">Zinc</keyword>
<comment type="catalytic activity">
    <reaction evidence="7 11">
        <text>Releases C-terminal Arg and Lys from polypeptides.</text>
        <dbReference type="EC" id="3.4.17.22"/>
    </reaction>
</comment>
<comment type="cofactor">
    <cofactor evidence="7 11">
        <name>Zn(2+)</name>
        <dbReference type="ChEBI" id="CHEBI:29105"/>
    </cofactor>
    <text evidence="7 11">Binds 2 Zn(2+) ions per subunit.</text>
</comment>
<comment type="subunit">
    <text evidence="8 10 11">Binds to pre-S, hepatitis B virus large envelope protein, via the carboxypeptidase-like domain.</text>
</comment>
<comment type="subcellular location">
    <subcellularLocation>
        <location evidence="10">Cell membrane</location>
        <topology evidence="3">Single-pass type I membrane protein</topology>
    </subcellularLocation>
</comment>
<comment type="tissue specificity">
    <text evidence="8 10">Expressed in liver, lung, kidney, heart, stomach, pancreas, spleen, gall bladder and intestine, but not in skeletal muscle.</text>
</comment>
<comment type="domain">
    <text evidence="7 11">There are 3 carboxypeptidase domains. Only the first two domains have any catalytic activity. The first domain preferentially cleaves C-terminal Arg residues, whereas the second preferentially cleaves C-terminal Lys residues. The third domain binds to pre-S, hepatitis B virus large envelope protein.</text>
</comment>
<comment type="PTM">
    <text evidence="9">The N-terminus is blocked.</text>
</comment>
<comment type="similarity">
    <text evidence="3">Belongs to the peptidase M14 family.</text>
</comment>
<protein>
    <recommendedName>
        <fullName>Carboxypeptidase D</fullName>
        <ecNumber>3.4.17.22</ecNumber>
    </recommendedName>
    <alternativeName>
        <fullName>Metallocarboxypeptidase D</fullName>
    </alternativeName>
    <alternativeName>
        <fullName>gp180</fullName>
    </alternativeName>
    <alternativeName>
        <fullName>p170</fullName>
    </alternativeName>
</protein>